<protein>
    <recommendedName>
        <fullName evidence="1">GTPase Obg</fullName>
        <ecNumber evidence="1">3.6.5.-</ecNumber>
    </recommendedName>
    <alternativeName>
        <fullName evidence="1">GTP-binding protein Obg</fullName>
    </alternativeName>
</protein>
<sequence>MRFVDEVVIKLQAGKGGNGCVSFRREKYVPRGGPDGGDGGNGGSIYLKADENVNTLIDYRYKREYYAENGRPGEGRNCYGKAGEDLYLVVPVGTSVFDIDTNKKIGEVLQHGQTFKLVSGGKRGIGNTHFKSSTNQAPRKFTLGEEGEYKEVRLELNLLADVALLGLPNAGKSTLIRSVSEATPKVADYPFTTMYPHLGVVKVGVDSFVMADIPGVIEGAAEGAGLGLRFLKHLTRARCVLHVVDICPFNESDPVENYFAVEKELEKYSQELFDKPRFLVINKIDLLADKVEQKCQEFVEQIGYQGNYYTISAAMKKGTDELAKKLNEFLQKQE</sequence>
<organism>
    <name type="scientific">Francisella tularensis subsp. tularensis (strain FSC 198)</name>
    <dbReference type="NCBI Taxonomy" id="393115"/>
    <lineage>
        <taxon>Bacteria</taxon>
        <taxon>Pseudomonadati</taxon>
        <taxon>Pseudomonadota</taxon>
        <taxon>Gammaproteobacteria</taxon>
        <taxon>Thiotrichales</taxon>
        <taxon>Francisellaceae</taxon>
        <taxon>Francisella</taxon>
    </lineage>
</organism>
<evidence type="ECO:0000255" key="1">
    <source>
        <dbReference type="HAMAP-Rule" id="MF_01454"/>
    </source>
</evidence>
<evidence type="ECO:0000255" key="2">
    <source>
        <dbReference type="PROSITE-ProRule" id="PRU01231"/>
    </source>
</evidence>
<name>OBG_FRAT1</name>
<proteinExistence type="inferred from homology"/>
<gene>
    <name evidence="1" type="primary">obg</name>
    <name type="ordered locus">FTF1731c</name>
</gene>
<keyword id="KW-0963">Cytoplasm</keyword>
<keyword id="KW-0342">GTP-binding</keyword>
<keyword id="KW-0378">Hydrolase</keyword>
<keyword id="KW-0460">Magnesium</keyword>
<keyword id="KW-0479">Metal-binding</keyword>
<keyword id="KW-0547">Nucleotide-binding</keyword>
<feature type="chain" id="PRO_0000385942" description="GTPase Obg">
    <location>
        <begin position="1"/>
        <end position="334"/>
    </location>
</feature>
<feature type="domain" description="Obg" evidence="2">
    <location>
        <begin position="1"/>
        <end position="159"/>
    </location>
</feature>
<feature type="domain" description="OBG-type G" evidence="1">
    <location>
        <begin position="160"/>
        <end position="331"/>
    </location>
</feature>
<feature type="binding site" evidence="1">
    <location>
        <begin position="166"/>
        <end position="173"/>
    </location>
    <ligand>
        <name>GTP</name>
        <dbReference type="ChEBI" id="CHEBI:37565"/>
    </ligand>
</feature>
<feature type="binding site" evidence="1">
    <location>
        <position position="173"/>
    </location>
    <ligand>
        <name>Mg(2+)</name>
        <dbReference type="ChEBI" id="CHEBI:18420"/>
    </ligand>
</feature>
<feature type="binding site" evidence="1">
    <location>
        <begin position="191"/>
        <end position="195"/>
    </location>
    <ligand>
        <name>GTP</name>
        <dbReference type="ChEBI" id="CHEBI:37565"/>
    </ligand>
</feature>
<feature type="binding site" evidence="1">
    <location>
        <position position="193"/>
    </location>
    <ligand>
        <name>Mg(2+)</name>
        <dbReference type="ChEBI" id="CHEBI:18420"/>
    </ligand>
</feature>
<feature type="binding site" evidence="1">
    <location>
        <begin position="212"/>
        <end position="215"/>
    </location>
    <ligand>
        <name>GTP</name>
        <dbReference type="ChEBI" id="CHEBI:37565"/>
    </ligand>
</feature>
<feature type="binding site" evidence="1">
    <location>
        <begin position="282"/>
        <end position="285"/>
    </location>
    <ligand>
        <name>GTP</name>
        <dbReference type="ChEBI" id="CHEBI:37565"/>
    </ligand>
</feature>
<feature type="binding site" evidence="1">
    <location>
        <begin position="312"/>
        <end position="314"/>
    </location>
    <ligand>
        <name>GTP</name>
        <dbReference type="ChEBI" id="CHEBI:37565"/>
    </ligand>
</feature>
<dbReference type="EC" id="3.6.5.-" evidence="1"/>
<dbReference type="EMBL" id="AM286280">
    <property type="protein sequence ID" value="CAL09747.1"/>
    <property type="molecule type" value="Genomic_DNA"/>
</dbReference>
<dbReference type="SMR" id="Q14FR3"/>
<dbReference type="KEGG" id="ftf:FTF1731c"/>
<dbReference type="HOGENOM" id="CLU_011747_2_0_6"/>
<dbReference type="GO" id="GO:0005737">
    <property type="term" value="C:cytoplasm"/>
    <property type="evidence" value="ECO:0007669"/>
    <property type="project" value="UniProtKB-SubCell"/>
</dbReference>
<dbReference type="GO" id="GO:0005525">
    <property type="term" value="F:GTP binding"/>
    <property type="evidence" value="ECO:0007669"/>
    <property type="project" value="UniProtKB-UniRule"/>
</dbReference>
<dbReference type="GO" id="GO:0003924">
    <property type="term" value="F:GTPase activity"/>
    <property type="evidence" value="ECO:0007669"/>
    <property type="project" value="UniProtKB-UniRule"/>
</dbReference>
<dbReference type="GO" id="GO:0000287">
    <property type="term" value="F:magnesium ion binding"/>
    <property type="evidence" value="ECO:0007669"/>
    <property type="project" value="InterPro"/>
</dbReference>
<dbReference type="GO" id="GO:0042254">
    <property type="term" value="P:ribosome biogenesis"/>
    <property type="evidence" value="ECO:0007669"/>
    <property type="project" value="UniProtKB-UniRule"/>
</dbReference>
<dbReference type="CDD" id="cd01898">
    <property type="entry name" value="Obg"/>
    <property type="match status" value="1"/>
</dbReference>
<dbReference type="FunFam" id="2.70.210.12:FF:000001">
    <property type="entry name" value="GTPase Obg"/>
    <property type="match status" value="1"/>
</dbReference>
<dbReference type="Gene3D" id="2.70.210.12">
    <property type="entry name" value="GTP1/OBG domain"/>
    <property type="match status" value="1"/>
</dbReference>
<dbReference type="Gene3D" id="3.40.50.300">
    <property type="entry name" value="P-loop containing nucleotide triphosphate hydrolases"/>
    <property type="match status" value="1"/>
</dbReference>
<dbReference type="HAMAP" id="MF_01454">
    <property type="entry name" value="GTPase_Obg"/>
    <property type="match status" value="1"/>
</dbReference>
<dbReference type="InterPro" id="IPR031167">
    <property type="entry name" value="G_OBG"/>
</dbReference>
<dbReference type="InterPro" id="IPR006073">
    <property type="entry name" value="GTP-bd"/>
</dbReference>
<dbReference type="InterPro" id="IPR014100">
    <property type="entry name" value="GTP-bd_Obg/CgtA"/>
</dbReference>
<dbReference type="InterPro" id="IPR006074">
    <property type="entry name" value="GTP1-OBG_CS"/>
</dbReference>
<dbReference type="InterPro" id="IPR006169">
    <property type="entry name" value="GTP1_OBG_dom"/>
</dbReference>
<dbReference type="InterPro" id="IPR036726">
    <property type="entry name" value="GTP1_OBG_dom_sf"/>
</dbReference>
<dbReference type="InterPro" id="IPR045086">
    <property type="entry name" value="OBG_GTPase"/>
</dbReference>
<dbReference type="InterPro" id="IPR027417">
    <property type="entry name" value="P-loop_NTPase"/>
</dbReference>
<dbReference type="NCBIfam" id="TIGR02729">
    <property type="entry name" value="Obg_CgtA"/>
    <property type="match status" value="1"/>
</dbReference>
<dbReference type="NCBIfam" id="NF008955">
    <property type="entry name" value="PRK12297.1"/>
    <property type="match status" value="1"/>
</dbReference>
<dbReference type="NCBIfam" id="NF008956">
    <property type="entry name" value="PRK12299.1"/>
    <property type="match status" value="1"/>
</dbReference>
<dbReference type="PANTHER" id="PTHR11702">
    <property type="entry name" value="DEVELOPMENTALLY REGULATED GTP-BINDING PROTEIN-RELATED"/>
    <property type="match status" value="1"/>
</dbReference>
<dbReference type="PANTHER" id="PTHR11702:SF31">
    <property type="entry name" value="MITOCHONDRIAL RIBOSOME-ASSOCIATED GTPASE 2"/>
    <property type="match status" value="1"/>
</dbReference>
<dbReference type="Pfam" id="PF01018">
    <property type="entry name" value="GTP1_OBG"/>
    <property type="match status" value="1"/>
</dbReference>
<dbReference type="Pfam" id="PF01926">
    <property type="entry name" value="MMR_HSR1"/>
    <property type="match status" value="1"/>
</dbReference>
<dbReference type="PIRSF" id="PIRSF002401">
    <property type="entry name" value="GTP_bd_Obg/CgtA"/>
    <property type="match status" value="1"/>
</dbReference>
<dbReference type="PRINTS" id="PR00326">
    <property type="entry name" value="GTP1OBG"/>
</dbReference>
<dbReference type="SUPFAM" id="SSF82051">
    <property type="entry name" value="Obg GTP-binding protein N-terminal domain"/>
    <property type="match status" value="1"/>
</dbReference>
<dbReference type="SUPFAM" id="SSF52540">
    <property type="entry name" value="P-loop containing nucleoside triphosphate hydrolases"/>
    <property type="match status" value="1"/>
</dbReference>
<dbReference type="PROSITE" id="PS51710">
    <property type="entry name" value="G_OBG"/>
    <property type="match status" value="1"/>
</dbReference>
<dbReference type="PROSITE" id="PS00905">
    <property type="entry name" value="GTP1_OBG"/>
    <property type="match status" value="1"/>
</dbReference>
<dbReference type="PROSITE" id="PS51883">
    <property type="entry name" value="OBG"/>
    <property type="match status" value="1"/>
</dbReference>
<reference key="1">
    <citation type="journal article" date="2007" name="PLoS ONE">
        <title>Genome sequencing shows that European isolates of Francisella tularensis subspecies tularensis are almost identical to US laboratory strain Schu S4.</title>
        <authorList>
            <person name="Chaudhuri R.R."/>
            <person name="Ren C.-P."/>
            <person name="Desmond L."/>
            <person name="Vincent G.A."/>
            <person name="Silman N.J."/>
            <person name="Brehm J.K."/>
            <person name="Elmore M.J."/>
            <person name="Hudson M.J."/>
            <person name="Forsman M."/>
            <person name="Isherwood K.E."/>
            <person name="Gurycova D."/>
            <person name="Minton N.P."/>
            <person name="Titball R.W."/>
            <person name="Pallen M.J."/>
            <person name="Vipond R."/>
        </authorList>
    </citation>
    <scope>NUCLEOTIDE SEQUENCE [LARGE SCALE GENOMIC DNA]</scope>
    <source>
        <strain>FSC 198</strain>
    </source>
</reference>
<comment type="function">
    <text evidence="1">An essential GTPase which binds GTP, GDP and possibly (p)ppGpp with moderate affinity, with high nucleotide exchange rates and a fairly low GTP hydrolysis rate. Plays a role in control of the cell cycle, stress response, ribosome biogenesis and in those bacteria that undergo differentiation, in morphogenesis control.</text>
</comment>
<comment type="cofactor">
    <cofactor evidence="1">
        <name>Mg(2+)</name>
        <dbReference type="ChEBI" id="CHEBI:18420"/>
    </cofactor>
</comment>
<comment type="subunit">
    <text evidence="1">Monomer.</text>
</comment>
<comment type="subcellular location">
    <subcellularLocation>
        <location evidence="1">Cytoplasm</location>
    </subcellularLocation>
</comment>
<comment type="similarity">
    <text evidence="1">Belongs to the TRAFAC class OBG-HflX-like GTPase superfamily. OBG GTPase family.</text>
</comment>
<accession>Q14FR3</accession>